<protein>
    <recommendedName>
        <fullName>Putative cuticle collagen 91</fullName>
    </recommendedName>
</protein>
<comment type="function">
    <text evidence="1">Nematode cuticles are composed largely of collagen-like proteins. The cuticle functions both as an exoskeleton and as a barrier to protect the worm from its environment (By similarity).</text>
</comment>
<comment type="subunit">
    <text evidence="1">Collagen polypeptide chains are complexed within the cuticle by disulfide bonds and other types of covalent cross-links.</text>
</comment>
<comment type="similarity">
    <text evidence="3">Belongs to the cuticular collagen family.</text>
</comment>
<evidence type="ECO:0000250" key="1"/>
<evidence type="ECO:0000256" key="2">
    <source>
        <dbReference type="SAM" id="MobiDB-lite"/>
    </source>
</evidence>
<evidence type="ECO:0000305" key="3"/>
<name>COL91_CAEEL</name>
<organism>
    <name type="scientific">Caenorhabditis elegans</name>
    <dbReference type="NCBI Taxonomy" id="6239"/>
    <lineage>
        <taxon>Eukaryota</taxon>
        <taxon>Metazoa</taxon>
        <taxon>Ecdysozoa</taxon>
        <taxon>Nematoda</taxon>
        <taxon>Chromadorea</taxon>
        <taxon>Rhabditida</taxon>
        <taxon>Rhabditina</taxon>
        <taxon>Rhabditomorpha</taxon>
        <taxon>Rhabditoidea</taxon>
        <taxon>Rhabditidae</taxon>
        <taxon>Peloderinae</taxon>
        <taxon>Caenorhabditis</taxon>
    </lineage>
</organism>
<proteinExistence type="inferred from homology"/>
<sequence>MPSASTISVISAISGVAVLGALLTATIIFNDINRFYYETMETFDEFKINEKNAWDTMVMSTRSPKEMLLGRARRQAALPDCQALAKNCPPGPPGPPGAPGAAGEPGVDGDAGAAGIDGVAIQFASAAGGACIQCPAGEAGPAGAPGAPGPAGPDGQPGADGQGGAPGPAGPEGPAGDAGAPGAPGAPGNDGQPGQNGQRSTGTPGAAGAPGPQGPVGSDGQPGSAGAPGAPGPAGAPGVDGQPGANGQPGPDGEQGHDGQPGPDAAYCPCPARSSVRQ</sequence>
<accession>P34391</accession>
<gene>
    <name type="primary">col-91</name>
    <name type="ORF">F09G8.6</name>
</gene>
<reference key="1">
    <citation type="journal article" date="1994" name="Nature">
        <title>2.2 Mb of contiguous nucleotide sequence from chromosome III of C. elegans.</title>
        <authorList>
            <person name="Wilson R."/>
            <person name="Ainscough R."/>
            <person name="Anderson K."/>
            <person name="Baynes C."/>
            <person name="Berks M."/>
            <person name="Bonfield J."/>
            <person name="Burton J."/>
            <person name="Connell M."/>
            <person name="Copsey T."/>
            <person name="Cooper J."/>
            <person name="Coulson A."/>
            <person name="Craxton M."/>
            <person name="Dear S."/>
            <person name="Du Z."/>
            <person name="Durbin R."/>
            <person name="Favello A."/>
            <person name="Fraser A."/>
            <person name="Fulton L."/>
            <person name="Gardner A."/>
            <person name="Green P."/>
            <person name="Hawkins T."/>
            <person name="Hillier L."/>
            <person name="Jier M."/>
            <person name="Johnston L."/>
            <person name="Jones M."/>
            <person name="Kershaw J."/>
            <person name="Kirsten J."/>
            <person name="Laisster N."/>
            <person name="Latreille P."/>
            <person name="Lightning J."/>
            <person name="Lloyd C."/>
            <person name="Mortimore B."/>
            <person name="O'Callaghan M."/>
            <person name="Parsons J."/>
            <person name="Percy C."/>
            <person name="Rifken L."/>
            <person name="Roopra A."/>
            <person name="Saunders D."/>
            <person name="Shownkeen R."/>
            <person name="Sims M."/>
            <person name="Smaldon N."/>
            <person name="Smith A."/>
            <person name="Smith M."/>
            <person name="Sonnhammer E."/>
            <person name="Staden R."/>
            <person name="Sulston J."/>
            <person name="Thierry-Mieg J."/>
            <person name="Thomas K."/>
            <person name="Vaudin M."/>
            <person name="Vaughan K."/>
            <person name="Waterston R."/>
            <person name="Watson A."/>
            <person name="Weinstock L."/>
            <person name="Wilkinson-Sproat J."/>
            <person name="Wohldman P."/>
        </authorList>
    </citation>
    <scope>NUCLEOTIDE SEQUENCE [LARGE SCALE GENOMIC DNA]</scope>
    <source>
        <strain>Bristol N2</strain>
    </source>
</reference>
<reference key="2">
    <citation type="journal article" date="1998" name="Science">
        <title>Genome sequence of the nematode C. elegans: a platform for investigating biology.</title>
        <authorList>
            <consortium name="The C. elegans sequencing consortium"/>
        </authorList>
    </citation>
    <scope>NUCLEOTIDE SEQUENCE [LARGE SCALE GENOMIC DNA]</scope>
    <source>
        <strain>Bristol N2</strain>
    </source>
</reference>
<feature type="chain" id="PRO_0000127603" description="Putative cuticle collagen 91">
    <location>
        <begin position="1"/>
        <end position="278"/>
    </location>
</feature>
<feature type="region of interest" description="Disordered" evidence="2">
    <location>
        <begin position="84"/>
        <end position="109"/>
    </location>
</feature>
<feature type="region of interest" description="Triple-helical region">
    <location>
        <begin position="91"/>
        <end position="120"/>
    </location>
</feature>
<feature type="region of interest" description="Triple-helical region">
    <location>
        <begin position="137"/>
        <end position="199"/>
    </location>
</feature>
<feature type="region of interest" description="Disordered" evidence="2">
    <location>
        <begin position="140"/>
        <end position="278"/>
    </location>
</feature>
<feature type="region of interest" description="Triple-helical region">
    <location>
        <begin position="202"/>
        <end position="264"/>
    </location>
</feature>
<feature type="compositionally biased region" description="Pro residues" evidence="2">
    <location>
        <begin position="89"/>
        <end position="98"/>
    </location>
</feature>
<feature type="compositionally biased region" description="Low complexity" evidence="2">
    <location>
        <begin position="99"/>
        <end position="109"/>
    </location>
</feature>
<feature type="compositionally biased region" description="Gly residues" evidence="2">
    <location>
        <begin position="158"/>
        <end position="167"/>
    </location>
</feature>
<feature type="compositionally biased region" description="Low complexity" evidence="2">
    <location>
        <begin position="172"/>
        <end position="228"/>
    </location>
</feature>
<feature type="compositionally biased region" description="Low complexity" evidence="2">
    <location>
        <begin position="236"/>
        <end position="245"/>
    </location>
</feature>
<dbReference type="EMBL" id="FO080289">
    <property type="protein sequence ID" value="CCD62645.1"/>
    <property type="molecule type" value="Genomic_DNA"/>
</dbReference>
<dbReference type="PIR" id="S44796">
    <property type="entry name" value="S44796"/>
</dbReference>
<dbReference type="RefSeq" id="NP_498814.1">
    <property type="nucleotide sequence ID" value="NM_066413.7"/>
</dbReference>
<dbReference type="SMR" id="P34391"/>
<dbReference type="STRING" id="6239.F09G8.6.1"/>
<dbReference type="PaxDb" id="6239-F09G8.6"/>
<dbReference type="PeptideAtlas" id="P34391"/>
<dbReference type="EnsemblMetazoa" id="F09G8.6.1">
    <property type="protein sequence ID" value="F09G8.6.1"/>
    <property type="gene ID" value="WBGene00000666"/>
</dbReference>
<dbReference type="GeneID" id="184269"/>
<dbReference type="KEGG" id="cel:CELE_F09G8.6"/>
<dbReference type="UCSC" id="F09G8.6">
    <property type="organism name" value="c. elegans"/>
</dbReference>
<dbReference type="AGR" id="WB:WBGene00000666"/>
<dbReference type="CTD" id="184269"/>
<dbReference type="WormBase" id="F09G8.6">
    <property type="protein sequence ID" value="CE00141"/>
    <property type="gene ID" value="WBGene00000666"/>
    <property type="gene designation" value="col-91"/>
</dbReference>
<dbReference type="eggNOG" id="KOG3544">
    <property type="taxonomic scope" value="Eukaryota"/>
</dbReference>
<dbReference type="GeneTree" id="ENSGT00970000196191"/>
<dbReference type="HOGENOM" id="CLU_001074_4_3_1"/>
<dbReference type="InParanoid" id="P34391"/>
<dbReference type="OMA" id="FYYETME"/>
<dbReference type="OrthoDB" id="5874209at2759"/>
<dbReference type="PhylomeDB" id="P34391"/>
<dbReference type="PRO" id="PR:P34391"/>
<dbReference type="Proteomes" id="UP000001940">
    <property type="component" value="Chromosome III"/>
</dbReference>
<dbReference type="Bgee" id="WBGene00000666">
    <property type="expression patterns" value="Expressed in larva and 2 other cell types or tissues"/>
</dbReference>
<dbReference type="GO" id="GO:0005581">
    <property type="term" value="C:collagen trimer"/>
    <property type="evidence" value="ECO:0007669"/>
    <property type="project" value="UniProtKB-KW"/>
</dbReference>
<dbReference type="GO" id="GO:0042302">
    <property type="term" value="F:structural constituent of cuticle"/>
    <property type="evidence" value="ECO:0007669"/>
    <property type="project" value="UniProtKB-KW"/>
</dbReference>
<dbReference type="InterPro" id="IPR002486">
    <property type="entry name" value="Col_cuticle_N"/>
</dbReference>
<dbReference type="PANTHER" id="PTHR24637">
    <property type="entry name" value="COLLAGEN"/>
    <property type="match status" value="1"/>
</dbReference>
<dbReference type="PANTHER" id="PTHR24637:SF318">
    <property type="entry name" value="CUTICLE COLLAGEN 91-RELATED"/>
    <property type="match status" value="1"/>
</dbReference>
<dbReference type="Pfam" id="PF01484">
    <property type="entry name" value="Col_cuticle_N"/>
    <property type="match status" value="1"/>
</dbReference>
<dbReference type="SMART" id="SM01088">
    <property type="entry name" value="Col_cuticle_N"/>
    <property type="match status" value="1"/>
</dbReference>
<keyword id="KW-0176">Collagen</keyword>
<keyword id="KW-0193">Cuticle</keyword>
<keyword id="KW-1015">Disulfide bond</keyword>
<keyword id="KW-1185">Reference proteome</keyword>
<keyword id="KW-0677">Repeat</keyword>